<keyword id="KW-0378">Hydrolase</keyword>
<keyword id="KW-0464">Manganese</keyword>
<keyword id="KW-0479">Metal-binding</keyword>
<keyword id="KW-0904">Protein phosphatase</keyword>
<keyword id="KW-1185">Reference proteome</keyword>
<evidence type="ECO:0000250" key="1"/>
<evidence type="ECO:0000256" key="2">
    <source>
        <dbReference type="SAM" id="MobiDB-lite"/>
    </source>
</evidence>
<evidence type="ECO:0000269" key="3">
    <source>
    </source>
</evidence>
<evidence type="ECO:0000269" key="4">
    <source>
    </source>
</evidence>
<evidence type="ECO:0000305" key="5"/>
<dbReference type="EC" id="3.1.3.16"/>
<dbReference type="EMBL" id="AF020537">
    <property type="protein sequence ID" value="AAB71415.1"/>
    <property type="molecule type" value="mRNA"/>
</dbReference>
<dbReference type="EMBL" id="AAFI02000013">
    <property type="protein sequence ID" value="EAL69560.1"/>
    <property type="molecule type" value="Genomic_DNA"/>
</dbReference>
<dbReference type="RefSeq" id="XP_643639.1">
    <property type="nucleotide sequence ID" value="XM_638547.1"/>
</dbReference>
<dbReference type="SMR" id="O15757"/>
<dbReference type="FunCoup" id="O15757">
    <property type="interactions" value="974"/>
</dbReference>
<dbReference type="STRING" id="44689.O15757"/>
<dbReference type="PaxDb" id="44689-DDB0185058"/>
<dbReference type="EnsemblProtists" id="EAL69560">
    <property type="protein sequence ID" value="EAL69560"/>
    <property type="gene ID" value="DDB_G0275619"/>
</dbReference>
<dbReference type="GeneID" id="8620226"/>
<dbReference type="KEGG" id="ddi:DDB_G0275619"/>
<dbReference type="dictyBase" id="DDB_G0275619">
    <property type="gene designation" value="pppB"/>
</dbReference>
<dbReference type="VEuPathDB" id="AmoebaDB:DDB_G0275619"/>
<dbReference type="eggNOG" id="KOG0374">
    <property type="taxonomic scope" value="Eukaryota"/>
</dbReference>
<dbReference type="HOGENOM" id="CLU_004962_0_0_1"/>
<dbReference type="InParanoid" id="O15757"/>
<dbReference type="OMA" id="TVQMSEN"/>
<dbReference type="PhylomeDB" id="O15757"/>
<dbReference type="BRENDA" id="3.1.3.16">
    <property type="organism ID" value="1939"/>
</dbReference>
<dbReference type="Reactome" id="R-DDI-2500257">
    <property type="pathway name" value="Resolution of Sister Chromatid Cohesion"/>
</dbReference>
<dbReference type="PRO" id="PR:O15757"/>
<dbReference type="Proteomes" id="UP000002195">
    <property type="component" value="Chromosome 2"/>
</dbReference>
<dbReference type="GO" id="GO:0005737">
    <property type="term" value="C:cytoplasm"/>
    <property type="evidence" value="ECO:0000318"/>
    <property type="project" value="GO_Central"/>
</dbReference>
<dbReference type="GO" id="GO:0005634">
    <property type="term" value="C:nucleus"/>
    <property type="evidence" value="ECO:0000318"/>
    <property type="project" value="GO_Central"/>
</dbReference>
<dbReference type="GO" id="GO:0046872">
    <property type="term" value="F:metal ion binding"/>
    <property type="evidence" value="ECO:0007669"/>
    <property type="project" value="UniProtKB-KW"/>
</dbReference>
<dbReference type="GO" id="GO:0004722">
    <property type="term" value="F:protein serine/threonine phosphatase activity"/>
    <property type="evidence" value="ECO:0000318"/>
    <property type="project" value="GO_Central"/>
</dbReference>
<dbReference type="CDD" id="cd07414">
    <property type="entry name" value="MPP_PP1_PPKL"/>
    <property type="match status" value="1"/>
</dbReference>
<dbReference type="FunFam" id="3.60.21.10:FF:000004">
    <property type="entry name" value="Serine/threonine-protein phosphatase"/>
    <property type="match status" value="1"/>
</dbReference>
<dbReference type="Gene3D" id="3.60.21.10">
    <property type="match status" value="1"/>
</dbReference>
<dbReference type="InterPro" id="IPR004843">
    <property type="entry name" value="Calcineurin-like_PHP_ApaH"/>
</dbReference>
<dbReference type="InterPro" id="IPR029052">
    <property type="entry name" value="Metallo-depent_PP-like"/>
</dbReference>
<dbReference type="InterPro" id="IPR050341">
    <property type="entry name" value="PP1_catalytic_subunit"/>
</dbReference>
<dbReference type="InterPro" id="IPR006186">
    <property type="entry name" value="Ser/Thr-sp_prot-phosphatase"/>
</dbReference>
<dbReference type="InterPro" id="IPR031675">
    <property type="entry name" value="STPPase_N"/>
</dbReference>
<dbReference type="PANTHER" id="PTHR11668">
    <property type="entry name" value="SERINE/THREONINE PROTEIN PHOSPHATASE"/>
    <property type="match status" value="1"/>
</dbReference>
<dbReference type="PANTHER" id="PTHR11668:SF300">
    <property type="entry name" value="SERINE_THREONINE-PROTEIN PHOSPHATASE"/>
    <property type="match status" value="1"/>
</dbReference>
<dbReference type="Pfam" id="PF00149">
    <property type="entry name" value="Metallophos"/>
    <property type="match status" value="1"/>
</dbReference>
<dbReference type="Pfam" id="PF16891">
    <property type="entry name" value="STPPase_N"/>
    <property type="match status" value="1"/>
</dbReference>
<dbReference type="PRINTS" id="PR00114">
    <property type="entry name" value="STPHPHTASE"/>
</dbReference>
<dbReference type="SMART" id="SM00156">
    <property type="entry name" value="PP2Ac"/>
    <property type="match status" value="1"/>
</dbReference>
<dbReference type="SUPFAM" id="SSF56300">
    <property type="entry name" value="Metallo-dependent phosphatases"/>
    <property type="match status" value="1"/>
</dbReference>
<dbReference type="PROSITE" id="PS00125">
    <property type="entry name" value="SER_THR_PHOSPHATASE"/>
    <property type="match status" value="1"/>
</dbReference>
<protein>
    <recommendedName>
        <fullName>Serine/threonine-protein phosphatase PP1</fullName>
        <ecNumber>3.1.3.16</ecNumber>
    </recommendedName>
    <alternativeName>
        <fullName>DdPP1c</fullName>
    </alternativeName>
</protein>
<sequence length="321" mass="36939">MEIDLDSIITRLLEPRTTKPGKLVDLAEEEIRYLTVQATEIFINQPILLELEAPIKICGDIHGQYYDLLRLFEYGGFPPQSNYLFLGDYVDRGKQSLETICLLLAYKIKYPENFFILRGNHECASINRIYGFYDECKRRYNSKLWKAFTDCFNCLPVAAIIDEKIFCMHGGLSPDLKNMDQIRRITRPTVVPDFGLLCDLLWADPDKNIQGWEDNDRGVSYTFGADVVESFLKKHDLDLVCRAHQVVEDGYEFFAKRQLVTLFSAPNYFGEFDNAGAMMGVDETLMCSFQILKPADKKKLTNDSNGRPLTPPRNKQQKPKK</sequence>
<organism>
    <name type="scientific">Dictyostelium discoideum</name>
    <name type="common">Social amoeba</name>
    <dbReference type="NCBI Taxonomy" id="44689"/>
    <lineage>
        <taxon>Eukaryota</taxon>
        <taxon>Amoebozoa</taxon>
        <taxon>Evosea</taxon>
        <taxon>Eumycetozoa</taxon>
        <taxon>Dictyostelia</taxon>
        <taxon>Dictyosteliales</taxon>
        <taxon>Dictyosteliaceae</taxon>
        <taxon>Dictyostelium</taxon>
    </lineage>
</organism>
<proteinExistence type="evidence at protein level"/>
<reference key="1">
    <citation type="journal article" date="2003" name="Biochem. J.">
        <title>Dictyostelium discoideum protein phosphatase-1 catalytic subunit exhibits distinct biochemical properties.</title>
        <authorList>
            <person name="Andrioli L.P.M."/>
            <person name="Zaini P.A."/>
            <person name="Viviani W."/>
            <person name="da Silva A.M."/>
        </authorList>
    </citation>
    <scope>NUCLEOTIDE SEQUENCE [MRNA]</scope>
    <scope>FUNCTION</scope>
    <scope>ACTIVITY REGULATION</scope>
    <scope>DEVELOPMENTAL STAGE</scope>
    <scope>MUTAGENESIS OF PHE-269</scope>
    <source>
        <strain>AX4</strain>
    </source>
</reference>
<reference key="2">
    <citation type="journal article" date="2002" name="Nature">
        <title>Sequence and analysis of chromosome 2 of Dictyostelium discoideum.</title>
        <authorList>
            <person name="Gloeckner G."/>
            <person name="Eichinger L."/>
            <person name="Szafranski K."/>
            <person name="Pachebat J.A."/>
            <person name="Bankier A.T."/>
            <person name="Dear P.H."/>
            <person name="Lehmann R."/>
            <person name="Baumgart C."/>
            <person name="Parra G."/>
            <person name="Abril J.F."/>
            <person name="Guigo R."/>
            <person name="Kumpf K."/>
            <person name="Tunggal B."/>
            <person name="Cox E.C."/>
            <person name="Quail M.A."/>
            <person name="Platzer M."/>
            <person name="Rosenthal A."/>
            <person name="Noegel A.A."/>
        </authorList>
    </citation>
    <scope>NUCLEOTIDE SEQUENCE [LARGE SCALE GENOMIC DNA]</scope>
    <source>
        <strain>AX4</strain>
    </source>
</reference>
<reference key="3">
    <citation type="journal article" date="2005" name="Nature">
        <title>The genome of the social amoeba Dictyostelium discoideum.</title>
        <authorList>
            <person name="Eichinger L."/>
            <person name="Pachebat J.A."/>
            <person name="Gloeckner G."/>
            <person name="Rajandream M.A."/>
            <person name="Sucgang R."/>
            <person name="Berriman M."/>
            <person name="Song J."/>
            <person name="Olsen R."/>
            <person name="Szafranski K."/>
            <person name="Xu Q."/>
            <person name="Tunggal B."/>
            <person name="Kummerfeld S."/>
            <person name="Madera M."/>
            <person name="Konfortov B.A."/>
            <person name="Rivero F."/>
            <person name="Bankier A.T."/>
            <person name="Lehmann R."/>
            <person name="Hamlin N."/>
            <person name="Davies R."/>
            <person name="Gaudet P."/>
            <person name="Fey P."/>
            <person name="Pilcher K."/>
            <person name="Chen G."/>
            <person name="Saunders D."/>
            <person name="Sodergren E.J."/>
            <person name="Davis P."/>
            <person name="Kerhornou A."/>
            <person name="Nie X."/>
            <person name="Hall N."/>
            <person name="Anjard C."/>
            <person name="Hemphill L."/>
            <person name="Bason N."/>
            <person name="Farbrother P."/>
            <person name="Desany B."/>
            <person name="Just E."/>
            <person name="Morio T."/>
            <person name="Rost R."/>
            <person name="Churcher C.M."/>
            <person name="Cooper J."/>
            <person name="Haydock S."/>
            <person name="van Driessche N."/>
            <person name="Cronin A."/>
            <person name="Goodhead I."/>
            <person name="Muzny D.M."/>
            <person name="Mourier T."/>
            <person name="Pain A."/>
            <person name="Lu M."/>
            <person name="Harper D."/>
            <person name="Lindsay R."/>
            <person name="Hauser H."/>
            <person name="James K.D."/>
            <person name="Quiles M."/>
            <person name="Madan Babu M."/>
            <person name="Saito T."/>
            <person name="Buchrieser C."/>
            <person name="Wardroper A."/>
            <person name="Felder M."/>
            <person name="Thangavelu M."/>
            <person name="Johnson D."/>
            <person name="Knights A."/>
            <person name="Loulseged H."/>
            <person name="Mungall K.L."/>
            <person name="Oliver K."/>
            <person name="Price C."/>
            <person name="Quail M.A."/>
            <person name="Urushihara H."/>
            <person name="Hernandez J."/>
            <person name="Rabbinowitsch E."/>
            <person name="Steffen D."/>
            <person name="Sanders M."/>
            <person name="Ma J."/>
            <person name="Kohara Y."/>
            <person name="Sharp S."/>
            <person name="Simmonds M.N."/>
            <person name="Spiegler S."/>
            <person name="Tivey A."/>
            <person name="Sugano S."/>
            <person name="White B."/>
            <person name="Walker D."/>
            <person name="Woodward J.R."/>
            <person name="Winckler T."/>
            <person name="Tanaka Y."/>
            <person name="Shaulsky G."/>
            <person name="Schleicher M."/>
            <person name="Weinstock G.M."/>
            <person name="Rosenthal A."/>
            <person name="Cox E.C."/>
            <person name="Chisholm R.L."/>
            <person name="Gibbs R.A."/>
            <person name="Loomis W.F."/>
            <person name="Platzer M."/>
            <person name="Kay R.R."/>
            <person name="Williams J.G."/>
            <person name="Dear P.H."/>
            <person name="Noegel A.A."/>
            <person name="Barrell B.G."/>
            <person name="Kuspa A."/>
        </authorList>
    </citation>
    <scope>NUCLEOTIDE SEQUENCE [LARGE SCALE GENOMIC DNA]</scope>
    <source>
        <strain>AX4</strain>
    </source>
</reference>
<reference key="4">
    <citation type="journal article" date="2007" name="Biochimie">
        <title>Identification and domain mapping of Dictyostelium discoideum type-1 protein phosphatase inhibitor-2.</title>
        <authorList>
            <person name="Sousa-Canavez J.M."/>
            <person name="Beton D."/>
            <person name="Gonzalez-Kristeller D.C."/>
            <person name="da Silva A.M."/>
        </authorList>
    </citation>
    <scope>ACTIVITY REGULATION</scope>
    <scope>INTERACTION WITH DPIA</scope>
    <scope>MUTAGENESIS OF PHE-269</scope>
    <source>
        <strain>AX4</strain>
    </source>
</reference>
<gene>
    <name type="primary">pppB</name>
    <name type="ORF">DDB_G0275619</name>
</gene>
<feature type="chain" id="PRO_0000328376" description="Serine/threonine-protein phosphatase PP1">
    <location>
        <begin position="1"/>
        <end position="321"/>
    </location>
</feature>
<feature type="region of interest" description="Disordered" evidence="2">
    <location>
        <begin position="298"/>
        <end position="321"/>
    </location>
</feature>
<feature type="active site" description="Proton donor" evidence="1">
    <location>
        <position position="121"/>
    </location>
</feature>
<feature type="binding site" evidence="1">
    <location>
        <position position="60"/>
    </location>
    <ligand>
        <name>Mn(2+)</name>
        <dbReference type="ChEBI" id="CHEBI:29035"/>
        <label>1</label>
    </ligand>
</feature>
<feature type="binding site" evidence="1">
    <location>
        <position position="62"/>
    </location>
    <ligand>
        <name>Mn(2+)</name>
        <dbReference type="ChEBI" id="CHEBI:29035"/>
        <label>1</label>
    </ligand>
</feature>
<feature type="binding site" evidence="1">
    <location>
        <position position="88"/>
    </location>
    <ligand>
        <name>Mn(2+)</name>
        <dbReference type="ChEBI" id="CHEBI:29035"/>
        <label>1</label>
    </ligand>
</feature>
<feature type="binding site" evidence="1">
    <location>
        <position position="88"/>
    </location>
    <ligand>
        <name>Mn(2+)</name>
        <dbReference type="ChEBI" id="CHEBI:29035"/>
        <label>2</label>
    </ligand>
</feature>
<feature type="binding site" evidence="1">
    <location>
        <position position="120"/>
    </location>
    <ligand>
        <name>Mn(2+)</name>
        <dbReference type="ChEBI" id="CHEBI:29035"/>
        <label>2</label>
    </ligand>
</feature>
<feature type="binding site" evidence="1">
    <location>
        <position position="169"/>
    </location>
    <ligand>
        <name>Mn(2+)</name>
        <dbReference type="ChEBI" id="CHEBI:29035"/>
        <label>2</label>
    </ligand>
</feature>
<feature type="binding site" evidence="1">
    <location>
        <position position="244"/>
    </location>
    <ligand>
        <name>Mn(2+)</name>
        <dbReference type="ChEBI" id="CHEBI:29035"/>
        <label>2</label>
    </ligand>
</feature>
<feature type="mutagenesis site" description="Five-fold increase in phosphatase activity, decreased binding efficiency to dpiA and reduced sensitivity to dpiA inhibition." evidence="3 4">
    <original>F</original>
    <variation>C</variation>
    <location>
        <position position="269"/>
    </location>
</feature>
<name>PP1_DICDI</name>
<accession>O15757</accession>
<accession>Q552P2</accession>
<comment type="function">
    <text evidence="3">Protein phosphatase activity in vitro.</text>
</comment>
<comment type="catalytic activity">
    <reaction>
        <text>O-phospho-L-seryl-[protein] + H2O = L-seryl-[protein] + phosphate</text>
        <dbReference type="Rhea" id="RHEA:20629"/>
        <dbReference type="Rhea" id="RHEA-COMP:9863"/>
        <dbReference type="Rhea" id="RHEA-COMP:11604"/>
        <dbReference type="ChEBI" id="CHEBI:15377"/>
        <dbReference type="ChEBI" id="CHEBI:29999"/>
        <dbReference type="ChEBI" id="CHEBI:43474"/>
        <dbReference type="ChEBI" id="CHEBI:83421"/>
        <dbReference type="EC" id="3.1.3.16"/>
    </reaction>
</comment>
<comment type="catalytic activity">
    <reaction>
        <text>O-phospho-L-threonyl-[protein] + H2O = L-threonyl-[protein] + phosphate</text>
        <dbReference type="Rhea" id="RHEA:47004"/>
        <dbReference type="Rhea" id="RHEA-COMP:11060"/>
        <dbReference type="Rhea" id="RHEA-COMP:11605"/>
        <dbReference type="ChEBI" id="CHEBI:15377"/>
        <dbReference type="ChEBI" id="CHEBI:30013"/>
        <dbReference type="ChEBI" id="CHEBI:43474"/>
        <dbReference type="ChEBI" id="CHEBI:61977"/>
        <dbReference type="EC" id="3.1.3.16"/>
    </reaction>
</comment>
<comment type="cofactor">
    <cofactor evidence="1">
        <name>Mn(2+)</name>
        <dbReference type="ChEBI" id="CHEBI:29035"/>
    </cofactor>
    <text evidence="1">Binds 2 manganese ions per subunit.</text>
</comment>
<comment type="activity regulation">
    <text evidence="3 4">Inhibited by okadaic acid, tautomycin and calyculin A. Inhibited by phosphatase inhibitor 2 (dpiA).</text>
</comment>
<comment type="subunit">
    <text evidence="4">Interacts with dpiA.</text>
</comment>
<comment type="developmental stage">
    <text evidence="3">Expressed throughout development.</text>
</comment>
<comment type="similarity">
    <text evidence="5">Belongs to the PPP phosphatase family.</text>
</comment>